<gene>
    <name evidence="1" type="primary">rplX</name>
    <name type="ordered locus">XCC0906</name>
</gene>
<accession>Q8PC40</accession>
<keyword id="KW-1185">Reference proteome</keyword>
<keyword id="KW-0687">Ribonucleoprotein</keyword>
<keyword id="KW-0689">Ribosomal protein</keyword>
<keyword id="KW-0694">RNA-binding</keyword>
<keyword id="KW-0699">rRNA-binding</keyword>
<sequence>MANRIKKGDQVVINTGKDKGKQGEVVRVEGDRVIVSNANVIKRHTKPNPQAGVAGGVVEREASIHISNVNIVNPATGKGERVGFKVLEDGRKLRVFRSSGEALDA</sequence>
<comment type="function">
    <text evidence="1">One of two assembly initiator proteins, it binds directly to the 5'-end of the 23S rRNA, where it nucleates assembly of the 50S subunit.</text>
</comment>
<comment type="function">
    <text evidence="1">One of the proteins that surrounds the polypeptide exit tunnel on the outside of the subunit.</text>
</comment>
<comment type="subunit">
    <text evidence="1">Part of the 50S ribosomal subunit.</text>
</comment>
<comment type="similarity">
    <text evidence="1">Belongs to the universal ribosomal protein uL24 family.</text>
</comment>
<dbReference type="EMBL" id="AE008922">
    <property type="protein sequence ID" value="AAM40216.1"/>
    <property type="molecule type" value="Genomic_DNA"/>
</dbReference>
<dbReference type="RefSeq" id="NP_636292.1">
    <property type="nucleotide sequence ID" value="NC_003902.1"/>
</dbReference>
<dbReference type="RefSeq" id="WP_008571669.1">
    <property type="nucleotide sequence ID" value="NC_003902.1"/>
</dbReference>
<dbReference type="SMR" id="Q8PC40"/>
<dbReference type="STRING" id="190485.XCC0906"/>
<dbReference type="EnsemblBacteria" id="AAM40216">
    <property type="protein sequence ID" value="AAM40216"/>
    <property type="gene ID" value="XCC0906"/>
</dbReference>
<dbReference type="GeneID" id="97509347"/>
<dbReference type="KEGG" id="xcc:XCC0906"/>
<dbReference type="PATRIC" id="fig|190485.4.peg.978"/>
<dbReference type="eggNOG" id="COG0198">
    <property type="taxonomic scope" value="Bacteria"/>
</dbReference>
<dbReference type="HOGENOM" id="CLU_093315_2_2_6"/>
<dbReference type="OrthoDB" id="9807419at2"/>
<dbReference type="Proteomes" id="UP000001010">
    <property type="component" value="Chromosome"/>
</dbReference>
<dbReference type="GO" id="GO:0022625">
    <property type="term" value="C:cytosolic large ribosomal subunit"/>
    <property type="evidence" value="ECO:0000318"/>
    <property type="project" value="GO_Central"/>
</dbReference>
<dbReference type="GO" id="GO:0019843">
    <property type="term" value="F:rRNA binding"/>
    <property type="evidence" value="ECO:0007669"/>
    <property type="project" value="UniProtKB-UniRule"/>
</dbReference>
<dbReference type="GO" id="GO:0003735">
    <property type="term" value="F:structural constituent of ribosome"/>
    <property type="evidence" value="ECO:0007669"/>
    <property type="project" value="InterPro"/>
</dbReference>
<dbReference type="GO" id="GO:0006412">
    <property type="term" value="P:translation"/>
    <property type="evidence" value="ECO:0000318"/>
    <property type="project" value="GO_Central"/>
</dbReference>
<dbReference type="CDD" id="cd06089">
    <property type="entry name" value="KOW_RPL26"/>
    <property type="match status" value="1"/>
</dbReference>
<dbReference type="FunFam" id="2.30.30.30:FF:000004">
    <property type="entry name" value="50S ribosomal protein L24"/>
    <property type="match status" value="1"/>
</dbReference>
<dbReference type="Gene3D" id="2.30.30.30">
    <property type="match status" value="1"/>
</dbReference>
<dbReference type="HAMAP" id="MF_01326_B">
    <property type="entry name" value="Ribosomal_uL24_B"/>
    <property type="match status" value="1"/>
</dbReference>
<dbReference type="InterPro" id="IPR005824">
    <property type="entry name" value="KOW"/>
</dbReference>
<dbReference type="InterPro" id="IPR014722">
    <property type="entry name" value="Rib_uL2_dom2"/>
</dbReference>
<dbReference type="InterPro" id="IPR003256">
    <property type="entry name" value="Ribosomal_uL24"/>
</dbReference>
<dbReference type="InterPro" id="IPR041988">
    <property type="entry name" value="Ribosomal_uL24_KOW"/>
</dbReference>
<dbReference type="InterPro" id="IPR008991">
    <property type="entry name" value="Translation_prot_SH3-like_sf"/>
</dbReference>
<dbReference type="NCBIfam" id="TIGR01079">
    <property type="entry name" value="rplX_bact"/>
    <property type="match status" value="1"/>
</dbReference>
<dbReference type="PANTHER" id="PTHR12903">
    <property type="entry name" value="MITOCHONDRIAL RIBOSOMAL PROTEIN L24"/>
    <property type="match status" value="1"/>
</dbReference>
<dbReference type="Pfam" id="PF00467">
    <property type="entry name" value="KOW"/>
    <property type="match status" value="1"/>
</dbReference>
<dbReference type="Pfam" id="PF17136">
    <property type="entry name" value="ribosomal_L24"/>
    <property type="match status" value="1"/>
</dbReference>
<dbReference type="SMART" id="SM00739">
    <property type="entry name" value="KOW"/>
    <property type="match status" value="1"/>
</dbReference>
<dbReference type="SUPFAM" id="SSF50104">
    <property type="entry name" value="Translation proteins SH3-like domain"/>
    <property type="match status" value="1"/>
</dbReference>
<feature type="chain" id="PRO_0000130755" description="Large ribosomal subunit protein uL24">
    <location>
        <begin position="1"/>
        <end position="105"/>
    </location>
</feature>
<evidence type="ECO:0000255" key="1">
    <source>
        <dbReference type="HAMAP-Rule" id="MF_01326"/>
    </source>
</evidence>
<evidence type="ECO:0000305" key="2"/>
<name>RL24_XANCP</name>
<proteinExistence type="inferred from homology"/>
<protein>
    <recommendedName>
        <fullName evidence="1">Large ribosomal subunit protein uL24</fullName>
    </recommendedName>
    <alternativeName>
        <fullName evidence="2">50S ribosomal protein L24</fullName>
    </alternativeName>
</protein>
<organism>
    <name type="scientific">Xanthomonas campestris pv. campestris (strain ATCC 33913 / DSM 3586 / NCPPB 528 / LMG 568 / P 25)</name>
    <dbReference type="NCBI Taxonomy" id="190485"/>
    <lineage>
        <taxon>Bacteria</taxon>
        <taxon>Pseudomonadati</taxon>
        <taxon>Pseudomonadota</taxon>
        <taxon>Gammaproteobacteria</taxon>
        <taxon>Lysobacterales</taxon>
        <taxon>Lysobacteraceae</taxon>
        <taxon>Xanthomonas</taxon>
    </lineage>
</organism>
<reference key="1">
    <citation type="journal article" date="2002" name="Nature">
        <title>Comparison of the genomes of two Xanthomonas pathogens with differing host specificities.</title>
        <authorList>
            <person name="da Silva A.C.R."/>
            <person name="Ferro J.A."/>
            <person name="Reinach F.C."/>
            <person name="Farah C.S."/>
            <person name="Furlan L.R."/>
            <person name="Quaggio R.B."/>
            <person name="Monteiro-Vitorello C.B."/>
            <person name="Van Sluys M.A."/>
            <person name="Almeida N.F. Jr."/>
            <person name="Alves L.M.C."/>
            <person name="do Amaral A.M."/>
            <person name="Bertolini M.C."/>
            <person name="Camargo L.E.A."/>
            <person name="Camarotte G."/>
            <person name="Cannavan F."/>
            <person name="Cardozo J."/>
            <person name="Chambergo F."/>
            <person name="Ciapina L.P."/>
            <person name="Cicarelli R.M.B."/>
            <person name="Coutinho L.L."/>
            <person name="Cursino-Santos J.R."/>
            <person name="El-Dorry H."/>
            <person name="Faria J.B."/>
            <person name="Ferreira A.J.S."/>
            <person name="Ferreira R.C.C."/>
            <person name="Ferro M.I.T."/>
            <person name="Formighieri E.F."/>
            <person name="Franco M.C."/>
            <person name="Greggio C.C."/>
            <person name="Gruber A."/>
            <person name="Katsuyama A.M."/>
            <person name="Kishi L.T."/>
            <person name="Leite R.P."/>
            <person name="Lemos E.G.M."/>
            <person name="Lemos M.V.F."/>
            <person name="Locali E.C."/>
            <person name="Machado M.A."/>
            <person name="Madeira A.M.B.N."/>
            <person name="Martinez-Rossi N.M."/>
            <person name="Martins E.C."/>
            <person name="Meidanis J."/>
            <person name="Menck C.F.M."/>
            <person name="Miyaki C.Y."/>
            <person name="Moon D.H."/>
            <person name="Moreira L.M."/>
            <person name="Novo M.T.M."/>
            <person name="Okura V.K."/>
            <person name="Oliveira M.C."/>
            <person name="Oliveira V.R."/>
            <person name="Pereira H.A."/>
            <person name="Rossi A."/>
            <person name="Sena J.A.D."/>
            <person name="Silva C."/>
            <person name="de Souza R.F."/>
            <person name="Spinola L.A.F."/>
            <person name="Takita M.A."/>
            <person name="Tamura R.E."/>
            <person name="Teixeira E.C."/>
            <person name="Tezza R.I.D."/>
            <person name="Trindade dos Santos M."/>
            <person name="Truffi D."/>
            <person name="Tsai S.M."/>
            <person name="White F.F."/>
            <person name="Setubal J.C."/>
            <person name="Kitajima J.P."/>
        </authorList>
    </citation>
    <scope>NUCLEOTIDE SEQUENCE [LARGE SCALE GENOMIC DNA]</scope>
    <source>
        <strain>ATCC 33913 / DSM 3586 / NCPPB 528 / LMG 568 / P 25</strain>
    </source>
</reference>